<protein>
    <recommendedName>
        <fullName>Dolichyl-diphosphooligosaccharide--protein glycosyltransferase subunit DAD2</fullName>
        <shortName>Oligosaccharyl transferase subunit DAD2</shortName>
    </recommendedName>
    <alternativeName>
        <fullName>Defender against cell death 2</fullName>
        <shortName>DAD-2</shortName>
    </alternativeName>
</protein>
<organism>
    <name type="scientific">Hordeum vulgare</name>
    <name type="common">Barley</name>
    <dbReference type="NCBI Taxonomy" id="4513"/>
    <lineage>
        <taxon>Eukaryota</taxon>
        <taxon>Viridiplantae</taxon>
        <taxon>Streptophyta</taxon>
        <taxon>Embryophyta</taxon>
        <taxon>Tracheophyta</taxon>
        <taxon>Spermatophyta</taxon>
        <taxon>Magnoliopsida</taxon>
        <taxon>Liliopsida</taxon>
        <taxon>Poales</taxon>
        <taxon>Poaceae</taxon>
        <taxon>BOP clade</taxon>
        <taxon>Pooideae</taxon>
        <taxon>Triticodae</taxon>
        <taxon>Triticeae</taxon>
        <taxon>Hordeinae</taxon>
        <taxon>Hordeum</taxon>
    </lineage>
</organism>
<proteinExistence type="inferred from homology"/>
<gene>
    <name type="primary">DAD2</name>
</gene>
<comment type="function">
    <text evidence="2">Subunit of the oligosaccharyl transferase (OST) complex that catalyzes the initial transfer of a defined glycan (Glc(3)Man(9)GlcNAc(2) in eukaryotes) from the lipid carrier dolichol-pyrophosphate to an asparagine residue within an Asn-X-Ser/Thr consensus motif in nascent polypeptide chains, the first step in protein N-glycosylation. N-glycosylation occurs cotranslationally and the complex associates with the Sec61 complex at the channel-forming translocon complex that mediates protein translocation across the endoplasmic reticulum (ER). All subunits are required for a maximal enzyme activity.</text>
</comment>
<comment type="pathway">
    <text>Protein modification; protein glycosylation.</text>
</comment>
<comment type="subunit">
    <text evidence="2">Component of the oligosaccharyltransferase (OST) complex.</text>
</comment>
<comment type="subcellular location">
    <subcellularLocation>
        <location evidence="1">Endoplasmic reticulum membrane</location>
        <topology evidence="1">Multi-pass membrane protein</topology>
    </subcellularLocation>
</comment>
<comment type="similarity">
    <text evidence="4">Belongs to the DAD/OST2 family.</text>
</comment>
<evidence type="ECO:0000250" key="1"/>
<evidence type="ECO:0000250" key="2">
    <source>
        <dbReference type="UniProtKB" id="P46964"/>
    </source>
</evidence>
<evidence type="ECO:0000255" key="3"/>
<evidence type="ECO:0000305" key="4"/>
<name>DAD2_HORVU</name>
<reference key="1">
    <citation type="journal article" date="2000" name="Mech. Dev.">
        <title>Glycosylation of phytepsin and expression of dad1, dad2 and ost1 during onset of cell death in germinating barley scutella.</title>
        <authorList>
            <person name="Lindholm P."/>
            <person name="Kuittinen T."/>
            <person name="Sorri O."/>
            <person name="Guo D."/>
            <person name="Merits A."/>
            <person name="Tormakangas K."/>
            <person name="Runeberg-Roos P."/>
        </authorList>
    </citation>
    <scope>NUCLEOTIDE SEQUENCE [MRNA]</scope>
</reference>
<dbReference type="EMBL" id="AJ133277">
    <property type="protein sequence ID" value="CAB56224.1"/>
    <property type="molecule type" value="mRNA"/>
</dbReference>
<dbReference type="SMR" id="Q9SME8"/>
<dbReference type="OMA" id="WSVYLIA"/>
<dbReference type="UniPathway" id="UPA00378"/>
<dbReference type="ExpressionAtlas" id="Q9SME8">
    <property type="expression patterns" value="baseline and differential"/>
</dbReference>
<dbReference type="GO" id="GO:0008250">
    <property type="term" value="C:oligosaccharyltransferase complex"/>
    <property type="evidence" value="ECO:0007669"/>
    <property type="project" value="InterPro"/>
</dbReference>
<dbReference type="GO" id="GO:0006487">
    <property type="term" value="P:protein N-linked glycosylation"/>
    <property type="evidence" value="ECO:0007669"/>
    <property type="project" value="TreeGrafter"/>
</dbReference>
<dbReference type="InterPro" id="IPR003038">
    <property type="entry name" value="DAD/Ost2"/>
</dbReference>
<dbReference type="PANTHER" id="PTHR10705">
    <property type="entry name" value="DOLICHYL-DIPHOSPHOOLIGOSACCHARIDE--PROTEIN GLYCOSYLTRANSFERASE SUBUNIT DAD1"/>
    <property type="match status" value="1"/>
</dbReference>
<dbReference type="PANTHER" id="PTHR10705:SF0">
    <property type="entry name" value="DOLICHYL-DIPHOSPHOOLIGOSACCHARIDE--PROTEIN GLYCOSYLTRANSFERASE SUBUNIT DAD1"/>
    <property type="match status" value="1"/>
</dbReference>
<dbReference type="Pfam" id="PF02109">
    <property type="entry name" value="DAD"/>
    <property type="match status" value="1"/>
</dbReference>
<dbReference type="PIRSF" id="PIRSF005588">
    <property type="entry name" value="DAD"/>
    <property type="match status" value="1"/>
</dbReference>
<sequence length="114" mass="12304">MPKAAGDAKLLIQSLNKAYAATPTNLKIIDLYVVFAVATALVQVVYMGIVGSFPFNSFLSGVLSSIGTAVLGVCLRIQVNKDNKEFKDLPPERAFADFVLCNLVLHLVIMNFLG</sequence>
<keyword id="KW-0053">Apoptosis</keyword>
<keyword id="KW-0256">Endoplasmic reticulum</keyword>
<keyword id="KW-0472">Membrane</keyword>
<keyword id="KW-0812">Transmembrane</keyword>
<keyword id="KW-1133">Transmembrane helix</keyword>
<feature type="chain" id="PRO_0000124024" description="Dolichyl-diphosphooligosaccharide--protein glycosyltransferase subunit DAD2">
    <location>
        <begin position="1"/>
        <end position="114"/>
    </location>
</feature>
<feature type="topological domain" description="Cytoplasmic" evidence="3">
    <location>
        <begin position="1"/>
        <end position="30"/>
    </location>
</feature>
<feature type="transmembrane region" description="Helical" evidence="3">
    <location>
        <begin position="31"/>
        <end position="51"/>
    </location>
</feature>
<feature type="topological domain" description="Lumenal" evidence="3">
    <location>
        <begin position="52"/>
        <end position="54"/>
    </location>
</feature>
<feature type="transmembrane region" description="Helical" evidence="3">
    <location>
        <begin position="55"/>
        <end position="75"/>
    </location>
</feature>
<feature type="topological domain" description="Cytoplasmic" evidence="3">
    <location>
        <begin position="76"/>
        <end position="93"/>
    </location>
</feature>
<feature type="transmembrane region" description="Helical" evidence="3">
    <location>
        <begin position="94"/>
        <end position="114"/>
    </location>
</feature>
<accession>Q9SME8</accession>